<name>TTCA_AZOSB</name>
<accession>A1K2P7</accession>
<sequence length="306" mass="33816">MPAVAPSAAESRHSNTFLRLKKKLERGVGEAIADYNMIGDGDTVMVCVSGGKDSYTLLSCLLALRERAPVDFRIVAMNLDQKQPGFPDDVLPAYFESIGVEYRIVTEDTYSIVKDKIPEGKTTCSLCSRLRRGIIYRTAKEIGATRIALGHHRDDMLETLFLNMFFGGKIKAMPPKLVSDDGQHVVIRPLAYCTENDIERFARGMDFPIIPCNLCGSQENAQRKQIKTMLQGWARDYPGRIESLATSLRNVVPSHLSDSALFDFVGLTRDTRVGEGDTVFDPPELPAAAAPITLRRADDDGDRSAT</sequence>
<comment type="function">
    <text evidence="1">Catalyzes the ATP-dependent 2-thiolation of cytidine in position 32 of tRNA, to form 2-thiocytidine (s(2)C32). The sulfur atoms are provided by the cysteine/cysteine desulfurase (IscS) system.</text>
</comment>
<comment type="catalytic activity">
    <reaction evidence="1">
        <text>cytidine(32) in tRNA + S-sulfanyl-L-cysteinyl-[cysteine desulfurase] + AH2 + ATP = 2-thiocytidine(32) in tRNA + L-cysteinyl-[cysteine desulfurase] + A + AMP + diphosphate + H(+)</text>
        <dbReference type="Rhea" id="RHEA:57048"/>
        <dbReference type="Rhea" id="RHEA-COMP:10288"/>
        <dbReference type="Rhea" id="RHEA-COMP:12157"/>
        <dbReference type="Rhea" id="RHEA-COMP:12158"/>
        <dbReference type="Rhea" id="RHEA-COMP:14821"/>
        <dbReference type="ChEBI" id="CHEBI:13193"/>
        <dbReference type="ChEBI" id="CHEBI:15378"/>
        <dbReference type="ChEBI" id="CHEBI:17499"/>
        <dbReference type="ChEBI" id="CHEBI:29950"/>
        <dbReference type="ChEBI" id="CHEBI:30616"/>
        <dbReference type="ChEBI" id="CHEBI:33019"/>
        <dbReference type="ChEBI" id="CHEBI:61963"/>
        <dbReference type="ChEBI" id="CHEBI:82748"/>
        <dbReference type="ChEBI" id="CHEBI:141453"/>
        <dbReference type="ChEBI" id="CHEBI:456215"/>
    </reaction>
    <physiologicalReaction direction="left-to-right" evidence="1">
        <dbReference type="Rhea" id="RHEA:57049"/>
    </physiologicalReaction>
</comment>
<comment type="cofactor">
    <cofactor evidence="1">
        <name>Mg(2+)</name>
        <dbReference type="ChEBI" id="CHEBI:18420"/>
    </cofactor>
</comment>
<comment type="cofactor">
    <cofactor evidence="1">
        <name>[4Fe-4S] cluster</name>
        <dbReference type="ChEBI" id="CHEBI:49883"/>
    </cofactor>
    <text evidence="1">Binds 1 [4Fe-4S] cluster per subunit. The cluster is chelated by three Cys residues, the fourth Fe has a free coordination site that may bind a sulfur atom transferred from the persulfide of IscS.</text>
</comment>
<comment type="pathway">
    <text evidence="1">tRNA modification.</text>
</comment>
<comment type="subunit">
    <text evidence="1">Homodimer.</text>
</comment>
<comment type="subcellular location">
    <subcellularLocation>
        <location evidence="1">Cytoplasm</location>
    </subcellularLocation>
</comment>
<comment type="miscellaneous">
    <text evidence="1">The thiolation reaction likely consists of two steps: a first activation step by ATP to form an adenylated intermediate of the target base of tRNA, and a second nucleophilic substitution step of the sulfur (S) atom supplied by the hydrosulfide attached to the Fe-S cluster.</text>
</comment>
<comment type="similarity">
    <text evidence="1">Belongs to the TtcA family.</text>
</comment>
<gene>
    <name evidence="1" type="primary">ttcA</name>
    <name type="ordered locus">azo0485</name>
</gene>
<keyword id="KW-0004">4Fe-4S</keyword>
<keyword id="KW-0067">ATP-binding</keyword>
<keyword id="KW-0963">Cytoplasm</keyword>
<keyword id="KW-0408">Iron</keyword>
<keyword id="KW-0411">Iron-sulfur</keyword>
<keyword id="KW-0460">Magnesium</keyword>
<keyword id="KW-0479">Metal-binding</keyword>
<keyword id="KW-0547">Nucleotide-binding</keyword>
<keyword id="KW-1185">Reference proteome</keyword>
<keyword id="KW-0694">RNA-binding</keyword>
<keyword id="KW-0808">Transferase</keyword>
<keyword id="KW-0819">tRNA processing</keyword>
<keyword id="KW-0820">tRNA-binding</keyword>
<evidence type="ECO:0000255" key="1">
    <source>
        <dbReference type="HAMAP-Rule" id="MF_01850"/>
    </source>
</evidence>
<reference key="1">
    <citation type="journal article" date="2006" name="Nat. Biotechnol.">
        <title>Complete genome of the mutualistic, N2-fixing grass endophyte Azoarcus sp. strain BH72.</title>
        <authorList>
            <person name="Krause A."/>
            <person name="Ramakumar A."/>
            <person name="Bartels D."/>
            <person name="Battistoni F."/>
            <person name="Bekel T."/>
            <person name="Boch J."/>
            <person name="Boehm M."/>
            <person name="Friedrich F."/>
            <person name="Hurek T."/>
            <person name="Krause L."/>
            <person name="Linke B."/>
            <person name="McHardy A.C."/>
            <person name="Sarkar A."/>
            <person name="Schneiker S."/>
            <person name="Syed A.A."/>
            <person name="Thauer R."/>
            <person name="Vorhoelter F.-J."/>
            <person name="Weidner S."/>
            <person name="Puehler A."/>
            <person name="Reinhold-Hurek B."/>
            <person name="Kaiser O."/>
            <person name="Goesmann A."/>
        </authorList>
    </citation>
    <scope>NUCLEOTIDE SEQUENCE [LARGE SCALE GENOMIC DNA]</scope>
    <source>
        <strain>BH72</strain>
    </source>
</reference>
<feature type="chain" id="PRO_0000348661" description="tRNA-cytidine(32) 2-sulfurtransferase">
    <location>
        <begin position="1"/>
        <end position="306"/>
    </location>
</feature>
<feature type="short sequence motif" description="PP-loop motif" evidence="1">
    <location>
        <begin position="49"/>
        <end position="54"/>
    </location>
</feature>
<feature type="binding site" evidence="1">
    <location>
        <position position="124"/>
    </location>
    <ligand>
        <name>[4Fe-4S] cluster</name>
        <dbReference type="ChEBI" id="CHEBI:49883"/>
    </ligand>
</feature>
<feature type="binding site" evidence="1">
    <location>
        <position position="127"/>
    </location>
    <ligand>
        <name>[4Fe-4S] cluster</name>
        <dbReference type="ChEBI" id="CHEBI:49883"/>
    </ligand>
</feature>
<feature type="binding site" evidence="1">
    <location>
        <position position="215"/>
    </location>
    <ligand>
        <name>[4Fe-4S] cluster</name>
        <dbReference type="ChEBI" id="CHEBI:49883"/>
    </ligand>
</feature>
<proteinExistence type="inferred from homology"/>
<organism>
    <name type="scientific">Azoarcus sp. (strain BH72)</name>
    <dbReference type="NCBI Taxonomy" id="418699"/>
    <lineage>
        <taxon>Bacteria</taxon>
        <taxon>Pseudomonadati</taxon>
        <taxon>Pseudomonadota</taxon>
        <taxon>Betaproteobacteria</taxon>
        <taxon>Rhodocyclales</taxon>
        <taxon>Zoogloeaceae</taxon>
        <taxon>Azoarcus</taxon>
    </lineage>
</organism>
<dbReference type="EC" id="2.8.1.-" evidence="1"/>
<dbReference type="EMBL" id="AM406670">
    <property type="protein sequence ID" value="CAL93102.1"/>
    <property type="molecule type" value="Genomic_DNA"/>
</dbReference>
<dbReference type="SMR" id="A1K2P7"/>
<dbReference type="STRING" id="62928.azo0485"/>
<dbReference type="KEGG" id="azo:azo0485"/>
<dbReference type="eggNOG" id="COG0037">
    <property type="taxonomic scope" value="Bacteria"/>
</dbReference>
<dbReference type="HOGENOM" id="CLU_026481_0_0_4"/>
<dbReference type="Proteomes" id="UP000002588">
    <property type="component" value="Chromosome"/>
</dbReference>
<dbReference type="GO" id="GO:0005737">
    <property type="term" value="C:cytoplasm"/>
    <property type="evidence" value="ECO:0007669"/>
    <property type="project" value="UniProtKB-SubCell"/>
</dbReference>
<dbReference type="GO" id="GO:0051539">
    <property type="term" value="F:4 iron, 4 sulfur cluster binding"/>
    <property type="evidence" value="ECO:0007669"/>
    <property type="project" value="UniProtKB-UniRule"/>
</dbReference>
<dbReference type="GO" id="GO:0005524">
    <property type="term" value="F:ATP binding"/>
    <property type="evidence" value="ECO:0007669"/>
    <property type="project" value="UniProtKB-UniRule"/>
</dbReference>
<dbReference type="GO" id="GO:0000287">
    <property type="term" value="F:magnesium ion binding"/>
    <property type="evidence" value="ECO:0007669"/>
    <property type="project" value="UniProtKB-UniRule"/>
</dbReference>
<dbReference type="GO" id="GO:0016783">
    <property type="term" value="F:sulfurtransferase activity"/>
    <property type="evidence" value="ECO:0007669"/>
    <property type="project" value="UniProtKB-UniRule"/>
</dbReference>
<dbReference type="GO" id="GO:0000049">
    <property type="term" value="F:tRNA binding"/>
    <property type="evidence" value="ECO:0007669"/>
    <property type="project" value="UniProtKB-KW"/>
</dbReference>
<dbReference type="GO" id="GO:0034227">
    <property type="term" value="P:tRNA thio-modification"/>
    <property type="evidence" value="ECO:0007669"/>
    <property type="project" value="UniProtKB-UniRule"/>
</dbReference>
<dbReference type="CDD" id="cd24138">
    <property type="entry name" value="TtcA-like"/>
    <property type="match status" value="1"/>
</dbReference>
<dbReference type="Gene3D" id="3.40.50.620">
    <property type="entry name" value="HUPs"/>
    <property type="match status" value="1"/>
</dbReference>
<dbReference type="HAMAP" id="MF_01850">
    <property type="entry name" value="TtcA"/>
    <property type="match status" value="1"/>
</dbReference>
<dbReference type="InterPro" id="IPR014729">
    <property type="entry name" value="Rossmann-like_a/b/a_fold"/>
</dbReference>
<dbReference type="InterPro" id="IPR011063">
    <property type="entry name" value="TilS/TtcA_N"/>
</dbReference>
<dbReference type="InterPro" id="IPR012089">
    <property type="entry name" value="tRNA_Cyd_32_2_STrfase"/>
</dbReference>
<dbReference type="NCBIfam" id="NF007972">
    <property type="entry name" value="PRK10696.1"/>
    <property type="match status" value="1"/>
</dbReference>
<dbReference type="PANTHER" id="PTHR43686:SF1">
    <property type="entry name" value="AMINOTRAN_5 DOMAIN-CONTAINING PROTEIN"/>
    <property type="match status" value="1"/>
</dbReference>
<dbReference type="PANTHER" id="PTHR43686">
    <property type="entry name" value="SULFURTRANSFERASE-RELATED"/>
    <property type="match status" value="1"/>
</dbReference>
<dbReference type="Pfam" id="PF01171">
    <property type="entry name" value="ATP_bind_3"/>
    <property type="match status" value="1"/>
</dbReference>
<dbReference type="SUPFAM" id="SSF52402">
    <property type="entry name" value="Adenine nucleotide alpha hydrolases-like"/>
    <property type="match status" value="1"/>
</dbReference>
<protein>
    <recommendedName>
        <fullName evidence="1">tRNA-cytidine(32) 2-sulfurtransferase</fullName>
        <ecNumber evidence="1">2.8.1.-</ecNumber>
    </recommendedName>
    <alternativeName>
        <fullName evidence="1">Two-thiocytidine biosynthesis protein A</fullName>
    </alternativeName>
    <alternativeName>
        <fullName evidence="1">tRNA 2-thiocytidine biosynthesis protein TtcA</fullName>
    </alternativeName>
</protein>